<keyword id="KW-0131">Cell cycle</keyword>
<keyword id="KW-0132">Cell division</keyword>
<keyword id="KW-0717">Septation</keyword>
<reference key="1">
    <citation type="journal article" date="2009" name="Proc. Natl. Acad. Sci. U.S.A.">
        <title>Characterizing a model human gut microbiota composed of members of its two dominant bacterial phyla.</title>
        <authorList>
            <person name="Mahowald M.A."/>
            <person name="Rey F.E."/>
            <person name="Seedorf H."/>
            <person name="Turnbaugh P.J."/>
            <person name="Fulton R.S."/>
            <person name="Wollam A."/>
            <person name="Shah N."/>
            <person name="Wang C."/>
            <person name="Magrini V."/>
            <person name="Wilson R.K."/>
            <person name="Cantarel B.L."/>
            <person name="Coutinho P.M."/>
            <person name="Henrissat B."/>
            <person name="Crock L.W."/>
            <person name="Russell A."/>
            <person name="Verberkmoes N.C."/>
            <person name="Hettich R.L."/>
            <person name="Gordon J.I."/>
        </authorList>
    </citation>
    <scope>NUCLEOTIDE SEQUENCE [LARGE SCALE GENOMIC DNA]</scope>
    <source>
        <strain>ATCC 33656 / DSM 3377 / JCM 17463 / KCTC 5835 / LMG 30912 / VPI 0990</strain>
    </source>
</reference>
<sequence>MILEVLMSQSVTIKSNKYGINLILDADMPFADLIKAVVEKFKASANFFKNAKLAISFEGRHLSDEEQQQIIAAIEENTTIEILCIVESGTEQEAIMKEQVEAFNEAVQKQCENVATVSVPEQFYRGTLRSGQVITSESSVTIIGDVNPGAKIIAQGNIVILGALKGNVHAGCTGDRSCFVFALDMQPIQIQIGDLIAKSPDEPQPKHRVRRKEKPAQEQAQIAIAKDGYIYIEPITKNILNSI</sequence>
<dbReference type="EMBL" id="CP001107">
    <property type="protein sequence ID" value="ACR73898.1"/>
    <property type="molecule type" value="Genomic_DNA"/>
</dbReference>
<dbReference type="SMR" id="C4Z9Q0"/>
<dbReference type="STRING" id="515619.EUBREC_0093"/>
<dbReference type="PaxDb" id="515619-EUBREC_0093"/>
<dbReference type="KEGG" id="ere:EUBREC_0093"/>
<dbReference type="HOGENOM" id="CLU_048711_2_2_9"/>
<dbReference type="Proteomes" id="UP000001477">
    <property type="component" value="Chromosome"/>
</dbReference>
<dbReference type="GO" id="GO:0000902">
    <property type="term" value="P:cell morphogenesis"/>
    <property type="evidence" value="ECO:0007669"/>
    <property type="project" value="InterPro"/>
</dbReference>
<dbReference type="GO" id="GO:0000917">
    <property type="term" value="P:division septum assembly"/>
    <property type="evidence" value="ECO:0007669"/>
    <property type="project" value="UniProtKB-KW"/>
</dbReference>
<dbReference type="GO" id="GO:1901891">
    <property type="term" value="P:regulation of cell septum assembly"/>
    <property type="evidence" value="ECO:0007669"/>
    <property type="project" value="InterPro"/>
</dbReference>
<dbReference type="Gene3D" id="2.160.20.70">
    <property type="match status" value="1"/>
</dbReference>
<dbReference type="Gene3D" id="3.30.160.540">
    <property type="match status" value="1"/>
</dbReference>
<dbReference type="HAMAP" id="MF_00267">
    <property type="entry name" value="MinC"/>
    <property type="match status" value="1"/>
</dbReference>
<dbReference type="InterPro" id="IPR016098">
    <property type="entry name" value="CAP/MinC_C"/>
</dbReference>
<dbReference type="InterPro" id="IPR013033">
    <property type="entry name" value="MinC"/>
</dbReference>
<dbReference type="InterPro" id="IPR036145">
    <property type="entry name" value="MinC_C_sf"/>
</dbReference>
<dbReference type="InterPro" id="IPR055219">
    <property type="entry name" value="MinC_N_1"/>
</dbReference>
<dbReference type="InterPro" id="IPR005526">
    <property type="entry name" value="Septum_form_inhib_MinC_C"/>
</dbReference>
<dbReference type="NCBIfam" id="TIGR01222">
    <property type="entry name" value="minC"/>
    <property type="match status" value="1"/>
</dbReference>
<dbReference type="PANTHER" id="PTHR34108">
    <property type="entry name" value="SEPTUM SITE-DETERMINING PROTEIN MINC"/>
    <property type="match status" value="1"/>
</dbReference>
<dbReference type="PANTHER" id="PTHR34108:SF1">
    <property type="entry name" value="SEPTUM SITE-DETERMINING PROTEIN MINC"/>
    <property type="match status" value="1"/>
</dbReference>
<dbReference type="Pfam" id="PF03775">
    <property type="entry name" value="MinC_C"/>
    <property type="match status" value="1"/>
</dbReference>
<dbReference type="Pfam" id="PF22642">
    <property type="entry name" value="MinC_N_1"/>
    <property type="match status" value="1"/>
</dbReference>
<dbReference type="SUPFAM" id="SSF63848">
    <property type="entry name" value="Cell-division inhibitor MinC, C-terminal domain"/>
    <property type="match status" value="1"/>
</dbReference>
<comment type="function">
    <text evidence="1">Cell division inhibitor that blocks the formation of polar Z ring septums. Rapidly oscillates between the poles of the cell to destabilize FtsZ filaments that have formed before they mature into polar Z rings. Prevents FtsZ polymerization.</text>
</comment>
<comment type="subunit">
    <text evidence="1">Interacts with MinD and FtsZ.</text>
</comment>
<comment type="similarity">
    <text evidence="1">Belongs to the MinC family.</text>
</comment>
<name>MINC_AGARV</name>
<organism>
    <name type="scientific">Agathobacter rectalis (strain ATCC 33656 / DSM 3377 / JCM 17463 / KCTC 5835 / VPI 0990)</name>
    <name type="common">Eubacterium rectale</name>
    <dbReference type="NCBI Taxonomy" id="515619"/>
    <lineage>
        <taxon>Bacteria</taxon>
        <taxon>Bacillati</taxon>
        <taxon>Bacillota</taxon>
        <taxon>Clostridia</taxon>
        <taxon>Lachnospirales</taxon>
        <taxon>Lachnospiraceae</taxon>
        <taxon>Agathobacter</taxon>
    </lineage>
</organism>
<feature type="chain" id="PRO_1000204695" description="Probable septum site-determining protein MinC">
    <location>
        <begin position="1"/>
        <end position="243"/>
    </location>
</feature>
<proteinExistence type="inferred from homology"/>
<evidence type="ECO:0000255" key="1">
    <source>
        <dbReference type="HAMAP-Rule" id="MF_00267"/>
    </source>
</evidence>
<protein>
    <recommendedName>
        <fullName evidence="1">Probable septum site-determining protein MinC</fullName>
    </recommendedName>
</protein>
<accession>C4Z9Q0</accession>
<gene>
    <name evidence="1" type="primary">minC</name>
    <name type="ordered locus">EUBREC_0093</name>
</gene>